<evidence type="ECO:0000250" key="1">
    <source>
        <dbReference type="UniProtKB" id="P56636"/>
    </source>
</evidence>
<evidence type="ECO:0000250" key="2">
    <source>
        <dbReference type="UniProtKB" id="Q2I2R8"/>
    </source>
</evidence>
<evidence type="ECO:0000269" key="3">
    <source>
    </source>
</evidence>
<evidence type="ECO:0000303" key="4">
    <source>
    </source>
</evidence>
<evidence type="ECO:0000305" key="5"/>
<evidence type="ECO:0000305" key="6">
    <source>
    </source>
</evidence>
<name>CA1LB_CONRE</name>
<comment type="function">
    <text evidence="2 3">Alpha-conotoxins act on postsynaptic membranes, they bind to the nicotinic acetylcholine receptors (nAChR) and thus inhibit them (PubMed:23533449). Is a specific blocker of the alpha-3-beta-4/CHRNA3-CHRNB4 image nAChR and may also block alpha-3-beta-4-alpha-5 (CHRNA3-CHRNB4-CHRNA5) channels (PubMed:23533449). Has possibly a distinct nAChR binding mode from other alpha-conotoxins, due to a different three residue motif (lacks the Ser-Xaa-Pro motif) (By similarity). In vivo, causes hyperactivity and behavioral disorders in mice following intracranial injection (PubMed:23533449).</text>
</comment>
<comment type="subcellular location">
    <subcellularLocation>
        <location evidence="3">Secreted</location>
    </subcellularLocation>
</comment>
<comment type="tissue specificity">
    <text evidence="6">Expressed by venom duct.</text>
</comment>
<comment type="domain">
    <text evidence="5">The cysteine framework is I (CC-C-C). Alpha4/7 pattern.</text>
</comment>
<comment type="mass spectrometry"/>
<comment type="similarity">
    <text evidence="5">Belongs to the conotoxin A superfamily.</text>
</comment>
<protein>
    <recommendedName>
        <fullName evidence="4">Alpha-conotoxin-like RgIB</fullName>
        <shortName evidence="4">Alpha-RGIB</shortName>
    </recommendedName>
</protein>
<reference key="1">
    <citation type="journal article" date="2013" name="Int. J. Pept.">
        <title>Alpha-RgIB: a novel antagonist peptide of neuronal acetylcholine receptor isolated from Conus regius venom.</title>
        <authorList>
            <person name="Braga M.C."/>
            <person name="Nery A.A."/>
            <person name="Ulrich H."/>
            <person name="Konno K."/>
            <person name="Sciani J.M."/>
            <person name="Pimenta D.C."/>
        </authorList>
    </citation>
    <scope>PROTEIN SEQUENCE</scope>
    <scope>FUNCTION</scope>
    <scope>MASS SPECTROMETRY</scope>
    <scope>SUBCELLULAR LOCATION</scope>
    <source>
        <tissue>Venom</tissue>
    </source>
</reference>
<organism>
    <name type="scientific">Conus regius</name>
    <name type="common">Crown cone</name>
    <dbReference type="NCBI Taxonomy" id="101314"/>
    <lineage>
        <taxon>Eukaryota</taxon>
        <taxon>Metazoa</taxon>
        <taxon>Spiralia</taxon>
        <taxon>Lophotrochozoa</taxon>
        <taxon>Mollusca</taxon>
        <taxon>Gastropoda</taxon>
        <taxon>Caenogastropoda</taxon>
        <taxon>Neogastropoda</taxon>
        <taxon>Conoidea</taxon>
        <taxon>Conidae</taxon>
        <taxon>Conus</taxon>
        <taxon>Stephanoconus</taxon>
    </lineage>
</organism>
<proteinExistence type="evidence at protein level"/>
<feature type="peptide" id="PRO_0000421854" description="Alpha-conotoxin-like RgIB" evidence="3">
    <location>
        <begin position="1"/>
        <end position="23"/>
    </location>
</feature>
<feature type="region of interest" description="Lacks the Ser-Xaa-Pro motif that is crucial for potent interaction with nAChR" evidence="5">
    <location>
        <begin position="7"/>
        <end position="9"/>
    </location>
</feature>
<feature type="disulfide bond" evidence="1">
    <location>
        <begin position="5"/>
        <end position="11"/>
    </location>
</feature>
<feature type="disulfide bond" evidence="1">
    <location>
        <begin position="6"/>
        <end position="19"/>
    </location>
</feature>
<dbReference type="GO" id="GO:0005576">
    <property type="term" value="C:extracellular region"/>
    <property type="evidence" value="ECO:0007669"/>
    <property type="project" value="UniProtKB-SubCell"/>
</dbReference>
<dbReference type="GO" id="GO:0035792">
    <property type="term" value="C:host cell postsynaptic membrane"/>
    <property type="evidence" value="ECO:0007669"/>
    <property type="project" value="UniProtKB-KW"/>
</dbReference>
<dbReference type="GO" id="GO:0030550">
    <property type="term" value="F:acetylcholine receptor inhibitor activity"/>
    <property type="evidence" value="ECO:0007669"/>
    <property type="project" value="UniProtKB-KW"/>
</dbReference>
<dbReference type="GO" id="GO:0099106">
    <property type="term" value="F:ion channel regulator activity"/>
    <property type="evidence" value="ECO:0007669"/>
    <property type="project" value="UniProtKB-KW"/>
</dbReference>
<dbReference type="GO" id="GO:0090729">
    <property type="term" value="F:toxin activity"/>
    <property type="evidence" value="ECO:0007669"/>
    <property type="project" value="UniProtKB-KW"/>
</dbReference>
<accession>C0HJA8</accession>
<sequence>TWEECCKNPGCRNNHVDRCRGQV</sequence>
<keyword id="KW-0008">Acetylcholine receptor inhibiting toxin</keyword>
<keyword id="KW-0903">Direct protein sequencing</keyword>
<keyword id="KW-1015">Disulfide bond</keyword>
<keyword id="KW-0872">Ion channel impairing toxin</keyword>
<keyword id="KW-0528">Neurotoxin</keyword>
<keyword id="KW-0629">Postsynaptic neurotoxin</keyword>
<keyword id="KW-0964">Secreted</keyword>
<keyword id="KW-0800">Toxin</keyword>